<geneLocation type="chloroplast"/>
<accession>Q1KXX5</accession>
<dbReference type="EMBL" id="DQ383815">
    <property type="protein sequence ID" value="ABD47130.1"/>
    <property type="molecule type" value="Genomic_DNA"/>
</dbReference>
<dbReference type="RefSeq" id="YP_588101.1">
    <property type="nucleotide sequence ID" value="NC_007977.1"/>
</dbReference>
<dbReference type="SMR" id="Q1KXX5"/>
<dbReference type="GeneID" id="4055643"/>
<dbReference type="KEGG" id="han:4055643"/>
<dbReference type="OrthoDB" id="564007at2759"/>
<dbReference type="GO" id="GO:0009535">
    <property type="term" value="C:chloroplast thylakoid membrane"/>
    <property type="evidence" value="ECO:0007669"/>
    <property type="project" value="UniProtKB-SubCell"/>
</dbReference>
<dbReference type="GO" id="GO:0009539">
    <property type="term" value="C:photosystem II reaction center"/>
    <property type="evidence" value="ECO:0007669"/>
    <property type="project" value="InterPro"/>
</dbReference>
<dbReference type="GO" id="GO:0015979">
    <property type="term" value="P:photosynthesis"/>
    <property type="evidence" value="ECO:0007669"/>
    <property type="project" value="UniProtKB-UniRule"/>
</dbReference>
<dbReference type="HAMAP" id="MF_01316">
    <property type="entry name" value="PSII_PsbI"/>
    <property type="match status" value="1"/>
</dbReference>
<dbReference type="InterPro" id="IPR003686">
    <property type="entry name" value="PSII_PsbI"/>
</dbReference>
<dbReference type="InterPro" id="IPR037271">
    <property type="entry name" value="PSII_PsbI_sf"/>
</dbReference>
<dbReference type="NCBIfam" id="NF002735">
    <property type="entry name" value="PRK02655.1"/>
    <property type="match status" value="1"/>
</dbReference>
<dbReference type="PANTHER" id="PTHR35772">
    <property type="entry name" value="PHOTOSYSTEM II REACTION CENTER PROTEIN I"/>
    <property type="match status" value="1"/>
</dbReference>
<dbReference type="PANTHER" id="PTHR35772:SF1">
    <property type="entry name" value="PHOTOSYSTEM II REACTION CENTER PROTEIN I"/>
    <property type="match status" value="1"/>
</dbReference>
<dbReference type="Pfam" id="PF02532">
    <property type="entry name" value="PsbI"/>
    <property type="match status" value="1"/>
</dbReference>
<dbReference type="SUPFAM" id="SSF161041">
    <property type="entry name" value="Photosystem II reaction center protein I, PsbI"/>
    <property type="match status" value="1"/>
</dbReference>
<evidence type="ECO:0000255" key="1">
    <source>
        <dbReference type="HAMAP-Rule" id="MF_01316"/>
    </source>
</evidence>
<comment type="function">
    <text evidence="1">One of the components of the core complex of photosystem II (PSII), required for its stability and/or assembly. PSII is a light-driven water:plastoquinone oxidoreductase that uses light energy to abstract electrons from H(2)O, generating O(2) and a proton gradient subsequently used for ATP formation. It consists of a core antenna complex that captures photons, and an electron transfer chain that converts photonic excitation into a charge separation.</text>
</comment>
<comment type="subunit">
    <text evidence="1">PSII is composed of 1 copy each of membrane proteins PsbA, PsbB, PsbC, PsbD, PsbE, PsbF, PsbH, PsbI, PsbJ, PsbK, PsbL, PsbM, PsbT, PsbX, PsbY, PsbZ, Psb30/Ycf12, at least 3 peripheral proteins of the oxygen-evolving complex and a large number of cofactors. It forms dimeric complexes.</text>
</comment>
<comment type="subcellular location">
    <subcellularLocation>
        <location evidence="1">Plastid</location>
        <location evidence="1">Chloroplast thylakoid membrane</location>
        <topology evidence="1">Single-pass membrane protein</topology>
    </subcellularLocation>
</comment>
<comment type="similarity">
    <text evidence="1">Belongs to the PsbI family.</text>
</comment>
<name>PSBI_HELAN</name>
<sequence>MLTLKLFVYTVVIFFVSLFIFGFLSNDPGRNPGREE</sequence>
<reference key="1">
    <citation type="submission" date="2006-01" db="EMBL/GenBank/DDBJ databases">
        <title>A comparison of the first two published chloroplast genomes in Asteraceae: Lactuca and Helianthus.</title>
        <authorList>
            <person name="Timme R.E."/>
            <person name="Kuehl J.V."/>
            <person name="Boore J.L."/>
            <person name="Jansen R.K."/>
        </authorList>
    </citation>
    <scope>NUCLEOTIDE SEQUENCE [LARGE SCALE GENOMIC DNA]</scope>
    <source>
        <strain>cv. HA383</strain>
    </source>
</reference>
<organism>
    <name type="scientific">Helianthus annuus</name>
    <name type="common">Common sunflower</name>
    <dbReference type="NCBI Taxonomy" id="4232"/>
    <lineage>
        <taxon>Eukaryota</taxon>
        <taxon>Viridiplantae</taxon>
        <taxon>Streptophyta</taxon>
        <taxon>Embryophyta</taxon>
        <taxon>Tracheophyta</taxon>
        <taxon>Spermatophyta</taxon>
        <taxon>Magnoliopsida</taxon>
        <taxon>eudicotyledons</taxon>
        <taxon>Gunneridae</taxon>
        <taxon>Pentapetalae</taxon>
        <taxon>asterids</taxon>
        <taxon>campanulids</taxon>
        <taxon>Asterales</taxon>
        <taxon>Asteraceae</taxon>
        <taxon>Asteroideae</taxon>
        <taxon>Heliantheae alliance</taxon>
        <taxon>Heliantheae</taxon>
        <taxon>Helianthus</taxon>
    </lineage>
</organism>
<keyword id="KW-0150">Chloroplast</keyword>
<keyword id="KW-0472">Membrane</keyword>
<keyword id="KW-0602">Photosynthesis</keyword>
<keyword id="KW-0604">Photosystem II</keyword>
<keyword id="KW-0934">Plastid</keyword>
<keyword id="KW-0674">Reaction center</keyword>
<keyword id="KW-0793">Thylakoid</keyword>
<keyword id="KW-0812">Transmembrane</keyword>
<keyword id="KW-1133">Transmembrane helix</keyword>
<protein>
    <recommendedName>
        <fullName evidence="1">Photosystem II reaction center protein I</fullName>
        <shortName evidence="1">PSII-I</shortName>
    </recommendedName>
    <alternativeName>
        <fullName evidence="1">PSII 4.8 kDa protein</fullName>
    </alternativeName>
</protein>
<proteinExistence type="inferred from homology"/>
<feature type="chain" id="PRO_0000275795" description="Photosystem II reaction center protein I">
    <location>
        <begin position="1"/>
        <end position="36"/>
    </location>
</feature>
<feature type="transmembrane region" description="Helical" evidence="1">
    <location>
        <begin position="4"/>
        <end position="24"/>
    </location>
</feature>
<gene>
    <name evidence="1" type="primary">psbI</name>
</gene>